<dbReference type="EC" id="2.8.1.8" evidence="1"/>
<dbReference type="EMBL" id="CP000514">
    <property type="protein sequence ID" value="ABM19449.1"/>
    <property type="molecule type" value="Genomic_DNA"/>
</dbReference>
<dbReference type="RefSeq" id="WP_011785836.1">
    <property type="nucleotide sequence ID" value="NC_008740.1"/>
</dbReference>
<dbReference type="SMR" id="A1U380"/>
<dbReference type="STRING" id="351348.Maqu_2373"/>
<dbReference type="GeneID" id="31820365"/>
<dbReference type="KEGG" id="maq:Maqu_2373"/>
<dbReference type="eggNOG" id="COG0320">
    <property type="taxonomic scope" value="Bacteria"/>
</dbReference>
<dbReference type="HOGENOM" id="CLU_033144_2_0_6"/>
<dbReference type="OrthoDB" id="9787898at2"/>
<dbReference type="UniPathway" id="UPA00538">
    <property type="reaction ID" value="UER00593"/>
</dbReference>
<dbReference type="Proteomes" id="UP000000998">
    <property type="component" value="Chromosome"/>
</dbReference>
<dbReference type="GO" id="GO:0005737">
    <property type="term" value="C:cytoplasm"/>
    <property type="evidence" value="ECO:0007669"/>
    <property type="project" value="UniProtKB-SubCell"/>
</dbReference>
<dbReference type="GO" id="GO:0051539">
    <property type="term" value="F:4 iron, 4 sulfur cluster binding"/>
    <property type="evidence" value="ECO:0007669"/>
    <property type="project" value="UniProtKB-UniRule"/>
</dbReference>
<dbReference type="GO" id="GO:0016992">
    <property type="term" value="F:lipoate synthase activity"/>
    <property type="evidence" value="ECO:0007669"/>
    <property type="project" value="UniProtKB-UniRule"/>
</dbReference>
<dbReference type="GO" id="GO:0046872">
    <property type="term" value="F:metal ion binding"/>
    <property type="evidence" value="ECO:0007669"/>
    <property type="project" value="UniProtKB-KW"/>
</dbReference>
<dbReference type="CDD" id="cd01335">
    <property type="entry name" value="Radical_SAM"/>
    <property type="match status" value="1"/>
</dbReference>
<dbReference type="FunFam" id="3.20.20.70:FF:000040">
    <property type="entry name" value="Lipoyl synthase"/>
    <property type="match status" value="1"/>
</dbReference>
<dbReference type="Gene3D" id="3.20.20.70">
    <property type="entry name" value="Aldolase class I"/>
    <property type="match status" value="1"/>
</dbReference>
<dbReference type="HAMAP" id="MF_00206">
    <property type="entry name" value="Lipoyl_synth"/>
    <property type="match status" value="1"/>
</dbReference>
<dbReference type="InterPro" id="IPR013785">
    <property type="entry name" value="Aldolase_TIM"/>
</dbReference>
<dbReference type="InterPro" id="IPR006638">
    <property type="entry name" value="Elp3/MiaA/NifB-like_rSAM"/>
</dbReference>
<dbReference type="InterPro" id="IPR003698">
    <property type="entry name" value="Lipoyl_synth"/>
</dbReference>
<dbReference type="InterPro" id="IPR007197">
    <property type="entry name" value="rSAM"/>
</dbReference>
<dbReference type="NCBIfam" id="TIGR00510">
    <property type="entry name" value="lipA"/>
    <property type="match status" value="1"/>
</dbReference>
<dbReference type="NCBIfam" id="NF004019">
    <property type="entry name" value="PRK05481.1"/>
    <property type="match status" value="1"/>
</dbReference>
<dbReference type="NCBIfam" id="NF009544">
    <property type="entry name" value="PRK12928.1"/>
    <property type="match status" value="1"/>
</dbReference>
<dbReference type="PANTHER" id="PTHR10949">
    <property type="entry name" value="LIPOYL SYNTHASE"/>
    <property type="match status" value="1"/>
</dbReference>
<dbReference type="PANTHER" id="PTHR10949:SF0">
    <property type="entry name" value="LIPOYL SYNTHASE, MITOCHONDRIAL"/>
    <property type="match status" value="1"/>
</dbReference>
<dbReference type="Pfam" id="PF04055">
    <property type="entry name" value="Radical_SAM"/>
    <property type="match status" value="1"/>
</dbReference>
<dbReference type="PIRSF" id="PIRSF005963">
    <property type="entry name" value="Lipoyl_synth"/>
    <property type="match status" value="1"/>
</dbReference>
<dbReference type="SFLD" id="SFLDF00271">
    <property type="entry name" value="lipoyl_synthase"/>
    <property type="match status" value="1"/>
</dbReference>
<dbReference type="SFLD" id="SFLDS00029">
    <property type="entry name" value="Radical_SAM"/>
    <property type="match status" value="1"/>
</dbReference>
<dbReference type="SMART" id="SM00729">
    <property type="entry name" value="Elp3"/>
    <property type="match status" value="1"/>
</dbReference>
<dbReference type="SUPFAM" id="SSF102114">
    <property type="entry name" value="Radical SAM enzymes"/>
    <property type="match status" value="1"/>
</dbReference>
<dbReference type="PROSITE" id="PS51918">
    <property type="entry name" value="RADICAL_SAM"/>
    <property type="match status" value="1"/>
</dbReference>
<proteinExistence type="inferred from homology"/>
<name>LIPA_MARN8</name>
<keyword id="KW-0004">4Fe-4S</keyword>
<keyword id="KW-0963">Cytoplasm</keyword>
<keyword id="KW-0408">Iron</keyword>
<keyword id="KW-0411">Iron-sulfur</keyword>
<keyword id="KW-0479">Metal-binding</keyword>
<keyword id="KW-0949">S-adenosyl-L-methionine</keyword>
<keyword id="KW-0808">Transferase</keyword>
<protein>
    <recommendedName>
        <fullName evidence="1">Lipoyl synthase</fullName>
        <ecNumber evidence="1">2.8.1.8</ecNumber>
    </recommendedName>
    <alternativeName>
        <fullName evidence="1">Lip-syn</fullName>
        <shortName evidence="1">LS</shortName>
    </alternativeName>
    <alternativeName>
        <fullName evidence="1">Lipoate synthase</fullName>
    </alternativeName>
    <alternativeName>
        <fullName evidence="1">Lipoic acid synthase</fullName>
    </alternativeName>
    <alternativeName>
        <fullName evidence="1">Sulfur insertion protein LipA</fullName>
    </alternativeName>
</protein>
<evidence type="ECO:0000255" key="1">
    <source>
        <dbReference type="HAMAP-Rule" id="MF_00206"/>
    </source>
</evidence>
<evidence type="ECO:0000255" key="2">
    <source>
        <dbReference type="PROSITE-ProRule" id="PRU01266"/>
    </source>
</evidence>
<evidence type="ECO:0000256" key="3">
    <source>
        <dbReference type="SAM" id="MobiDB-lite"/>
    </source>
</evidence>
<reference key="1">
    <citation type="journal article" date="2011" name="Appl. Environ. Microbiol.">
        <title>Genomic potential of Marinobacter aquaeolei, a biogeochemical 'opportunitroph'.</title>
        <authorList>
            <person name="Singer E."/>
            <person name="Webb E.A."/>
            <person name="Nelson W.C."/>
            <person name="Heidelberg J.F."/>
            <person name="Ivanova N."/>
            <person name="Pati A."/>
            <person name="Edwards K.J."/>
        </authorList>
    </citation>
    <scope>NUCLEOTIDE SEQUENCE [LARGE SCALE GENOMIC DNA]</scope>
    <source>
        <strain>ATCC 700491 / DSM 11845 / VT8</strain>
    </source>
</reference>
<accession>A1U380</accession>
<organism>
    <name type="scientific">Marinobacter nauticus (strain ATCC 700491 / DSM 11845 / VT8)</name>
    <name type="common">Marinobacter aquaeolei</name>
    <dbReference type="NCBI Taxonomy" id="351348"/>
    <lineage>
        <taxon>Bacteria</taxon>
        <taxon>Pseudomonadati</taxon>
        <taxon>Pseudomonadota</taxon>
        <taxon>Gammaproteobacteria</taxon>
        <taxon>Pseudomonadales</taxon>
        <taxon>Marinobacteraceae</taxon>
        <taxon>Marinobacter</taxon>
    </lineage>
</organism>
<comment type="function">
    <text evidence="1">Catalyzes the radical-mediated insertion of two sulfur atoms into the C-6 and C-8 positions of the octanoyl moiety bound to the lipoyl domains of lipoate-dependent enzymes, thereby converting the octanoylated domains into lipoylated derivatives.</text>
</comment>
<comment type="catalytic activity">
    <reaction evidence="1">
        <text>[[Fe-S] cluster scaffold protein carrying a second [4Fe-4S](2+) cluster] + N(6)-octanoyl-L-lysyl-[protein] + 2 oxidized [2Fe-2S]-[ferredoxin] + 2 S-adenosyl-L-methionine + 4 H(+) = [[Fe-S] cluster scaffold protein] + N(6)-[(R)-dihydrolipoyl]-L-lysyl-[protein] + 4 Fe(3+) + 2 hydrogen sulfide + 2 5'-deoxyadenosine + 2 L-methionine + 2 reduced [2Fe-2S]-[ferredoxin]</text>
        <dbReference type="Rhea" id="RHEA:16585"/>
        <dbReference type="Rhea" id="RHEA-COMP:9928"/>
        <dbReference type="Rhea" id="RHEA-COMP:10000"/>
        <dbReference type="Rhea" id="RHEA-COMP:10001"/>
        <dbReference type="Rhea" id="RHEA-COMP:10475"/>
        <dbReference type="Rhea" id="RHEA-COMP:14568"/>
        <dbReference type="Rhea" id="RHEA-COMP:14569"/>
        <dbReference type="ChEBI" id="CHEBI:15378"/>
        <dbReference type="ChEBI" id="CHEBI:17319"/>
        <dbReference type="ChEBI" id="CHEBI:29034"/>
        <dbReference type="ChEBI" id="CHEBI:29919"/>
        <dbReference type="ChEBI" id="CHEBI:33722"/>
        <dbReference type="ChEBI" id="CHEBI:33737"/>
        <dbReference type="ChEBI" id="CHEBI:33738"/>
        <dbReference type="ChEBI" id="CHEBI:57844"/>
        <dbReference type="ChEBI" id="CHEBI:59789"/>
        <dbReference type="ChEBI" id="CHEBI:78809"/>
        <dbReference type="ChEBI" id="CHEBI:83100"/>
        <dbReference type="EC" id="2.8.1.8"/>
    </reaction>
</comment>
<comment type="cofactor">
    <cofactor evidence="1">
        <name>[4Fe-4S] cluster</name>
        <dbReference type="ChEBI" id="CHEBI:49883"/>
    </cofactor>
    <text evidence="1">Binds 2 [4Fe-4S] clusters per subunit. One cluster is coordinated with 3 cysteines and an exchangeable S-adenosyl-L-methionine.</text>
</comment>
<comment type="pathway">
    <text evidence="1">Protein modification; protein lipoylation via endogenous pathway; protein N(6)-(lipoyl)lysine from octanoyl-[acyl-carrier-protein]: step 2/2.</text>
</comment>
<comment type="subcellular location">
    <subcellularLocation>
        <location evidence="1">Cytoplasm</location>
    </subcellularLocation>
</comment>
<comment type="similarity">
    <text evidence="1">Belongs to the radical SAM superfamily. Lipoyl synthase family.</text>
</comment>
<sequence length="348" mass="38550">MSESAKPRITSGSKFRNEHGFSAIKDGVKRSSSNTEGKSLERKPKWLRARMPGGERYDAVRRNVTEHRLSTVCQESHCPNIGECWTNGTATIMVMGSVCTRACKFCAVDTGNPKGWLDPEEPENTAKSVELMGLRYIVLTSVDRDDLPDGGAAHYAACVSAIKQRTPEVAVEALTPDFDAVMSDVEKVVDSGLDVFAQNVETVKRLTSRVRDPRAGYEKTLSVLAHAKKHRPDVLTKTSLMLGLGETEEEILETMDDLRAIGVDILTLGQYLRPTPNHLPVERYVTPEEFNRYRDIGLEKGFMEVPSGPMVRSSYRADRVFDKNNLGLSVPEVPVPDKAMQIPVKAVD</sequence>
<feature type="chain" id="PRO_0000325275" description="Lipoyl synthase">
    <location>
        <begin position="1"/>
        <end position="348"/>
    </location>
</feature>
<feature type="domain" description="Radical SAM core" evidence="2">
    <location>
        <begin position="85"/>
        <end position="303"/>
    </location>
</feature>
<feature type="region of interest" description="Disordered" evidence="3">
    <location>
        <begin position="1"/>
        <end position="45"/>
    </location>
</feature>
<feature type="binding site" evidence="1">
    <location>
        <position position="73"/>
    </location>
    <ligand>
        <name>[4Fe-4S] cluster</name>
        <dbReference type="ChEBI" id="CHEBI:49883"/>
        <label>1</label>
    </ligand>
</feature>
<feature type="binding site" evidence="1">
    <location>
        <position position="78"/>
    </location>
    <ligand>
        <name>[4Fe-4S] cluster</name>
        <dbReference type="ChEBI" id="CHEBI:49883"/>
        <label>1</label>
    </ligand>
</feature>
<feature type="binding site" evidence="1">
    <location>
        <position position="84"/>
    </location>
    <ligand>
        <name>[4Fe-4S] cluster</name>
        <dbReference type="ChEBI" id="CHEBI:49883"/>
        <label>1</label>
    </ligand>
</feature>
<feature type="binding site" evidence="1">
    <location>
        <position position="99"/>
    </location>
    <ligand>
        <name>[4Fe-4S] cluster</name>
        <dbReference type="ChEBI" id="CHEBI:49883"/>
        <label>2</label>
        <note>4Fe-4S-S-AdoMet</note>
    </ligand>
</feature>
<feature type="binding site" evidence="1">
    <location>
        <position position="103"/>
    </location>
    <ligand>
        <name>[4Fe-4S] cluster</name>
        <dbReference type="ChEBI" id="CHEBI:49883"/>
        <label>2</label>
        <note>4Fe-4S-S-AdoMet</note>
    </ligand>
</feature>
<feature type="binding site" evidence="1">
    <location>
        <position position="106"/>
    </location>
    <ligand>
        <name>[4Fe-4S] cluster</name>
        <dbReference type="ChEBI" id="CHEBI:49883"/>
        <label>2</label>
        <note>4Fe-4S-S-AdoMet</note>
    </ligand>
</feature>
<feature type="binding site" evidence="1">
    <location>
        <position position="314"/>
    </location>
    <ligand>
        <name>[4Fe-4S] cluster</name>
        <dbReference type="ChEBI" id="CHEBI:49883"/>
        <label>1</label>
    </ligand>
</feature>
<gene>
    <name evidence="1" type="primary">lipA</name>
    <name type="ordered locus">Maqu_2373</name>
</gene>